<sequence length="732" mass="80768">MDEAESFVPFQGIKKDVKGRLNCYKQDWISGLRAGFRILAPTTYIFFASAIPVITFGEQLERDTDGKITAVQTLVSTALCGVIHSIIGGQPLLILGVAEPTVIMYTFMFNFAKSRTDLGSNLFLAWTGWVCLWTGLLLFLLAVLGACTFINRFTRLAGELFGILIAMLFMQEAIRGIVDEFGVPGRTNPRSAEFQPAWVFANGMFGLVLSSGLLYTGLKSRKARSWRFGAEWLRGFIADYGVPVMVVVWTCISYIPWKSVPQGIPRRLVSPNPWSPGAYQNWTVIKEMVDVPVLYILLAVVPASMIAVLYYFDHSVASQLAQQEDFNLRKPPAYHYDLFLLGFLTILCGLIGIPPSNGVIPQSPMHTKSLATLNHQLLRNKLVAAARKCIRNNATIGEVYGSMEEAYQQMQSPLIHQEPSRIQGLKQSHIQKASNADALVDETVFDIETEVENILPVEVKEQRVSNFLQAMMVAGCVAAMPLIKRIPSSVLWGYFAYMAIESLPGNQFWERIVLLFTAPSRRFKVLEDNHAVFIETVPFKTMAMFTLFQTAYLLVCFGITWVPVAGVLFPLMIMFLVPVRQYVLPNFFKGAHLQDLDAAEYEEAPAILSFNLKPEGEVSRATSFADSGEVMDGMFTRSRGEIRKVSSLKLGGGGSGSTVGSPAGGGVELMRRVVSFQNPRVSEKVYIRSLSDFRGGGEISPRSSAGRAPFSPRSATGGGGGEQRLSNLGKSV</sequence>
<evidence type="ECO:0000250" key="1"/>
<evidence type="ECO:0000255" key="2"/>
<evidence type="ECO:0000256" key="3">
    <source>
        <dbReference type="SAM" id="MobiDB-lite"/>
    </source>
</evidence>
<evidence type="ECO:0000305" key="4"/>
<evidence type="ECO:0007744" key="5">
    <source>
    </source>
</evidence>
<organism>
    <name type="scientific">Arabidopsis thaliana</name>
    <name type="common">Mouse-ear cress</name>
    <dbReference type="NCBI Taxonomy" id="3702"/>
    <lineage>
        <taxon>Eukaryota</taxon>
        <taxon>Viridiplantae</taxon>
        <taxon>Streptophyta</taxon>
        <taxon>Embryophyta</taxon>
        <taxon>Tracheophyta</taxon>
        <taxon>Spermatophyta</taxon>
        <taxon>Magnoliopsida</taxon>
        <taxon>eudicotyledons</taxon>
        <taxon>Gunneridae</taxon>
        <taxon>Pentapetalae</taxon>
        <taxon>rosids</taxon>
        <taxon>malvids</taxon>
        <taxon>Brassicales</taxon>
        <taxon>Brassicaceae</taxon>
        <taxon>Camelineae</taxon>
        <taxon>Arabidopsis</taxon>
    </lineage>
</organism>
<reference key="1">
    <citation type="journal article" date="2000" name="Nature">
        <title>Sequence and analysis of chromosome 3 of the plant Arabidopsis thaliana.</title>
        <authorList>
            <person name="Salanoubat M."/>
            <person name="Lemcke K."/>
            <person name="Rieger M."/>
            <person name="Ansorge W."/>
            <person name="Unseld M."/>
            <person name="Fartmann B."/>
            <person name="Valle G."/>
            <person name="Bloecker H."/>
            <person name="Perez-Alonso M."/>
            <person name="Obermaier B."/>
            <person name="Delseny M."/>
            <person name="Boutry M."/>
            <person name="Grivell L.A."/>
            <person name="Mache R."/>
            <person name="Puigdomenech P."/>
            <person name="De Simone V."/>
            <person name="Choisne N."/>
            <person name="Artiguenave F."/>
            <person name="Robert C."/>
            <person name="Brottier P."/>
            <person name="Wincker P."/>
            <person name="Cattolico L."/>
            <person name="Weissenbach J."/>
            <person name="Saurin W."/>
            <person name="Quetier F."/>
            <person name="Schaefer M."/>
            <person name="Mueller-Auer S."/>
            <person name="Gabel C."/>
            <person name="Fuchs M."/>
            <person name="Benes V."/>
            <person name="Wurmbach E."/>
            <person name="Drzonek H."/>
            <person name="Erfle H."/>
            <person name="Jordan N."/>
            <person name="Bangert S."/>
            <person name="Wiedelmann R."/>
            <person name="Kranz H."/>
            <person name="Voss H."/>
            <person name="Holland R."/>
            <person name="Brandt P."/>
            <person name="Nyakatura G."/>
            <person name="Vezzi A."/>
            <person name="D'Angelo M."/>
            <person name="Pallavicini A."/>
            <person name="Toppo S."/>
            <person name="Simionati B."/>
            <person name="Conrad A."/>
            <person name="Hornischer K."/>
            <person name="Kauer G."/>
            <person name="Loehnert T.-H."/>
            <person name="Nordsiek G."/>
            <person name="Reichelt J."/>
            <person name="Scharfe M."/>
            <person name="Schoen O."/>
            <person name="Bargues M."/>
            <person name="Terol J."/>
            <person name="Climent J."/>
            <person name="Navarro P."/>
            <person name="Collado C."/>
            <person name="Perez-Perez A."/>
            <person name="Ottenwaelder B."/>
            <person name="Duchemin D."/>
            <person name="Cooke R."/>
            <person name="Laudie M."/>
            <person name="Berger-Llauro C."/>
            <person name="Purnelle B."/>
            <person name="Masuy D."/>
            <person name="de Haan M."/>
            <person name="Maarse A.C."/>
            <person name="Alcaraz J.-P."/>
            <person name="Cottet A."/>
            <person name="Casacuberta E."/>
            <person name="Monfort A."/>
            <person name="Argiriou A."/>
            <person name="Flores M."/>
            <person name="Liguori R."/>
            <person name="Vitale D."/>
            <person name="Mannhaupt G."/>
            <person name="Haase D."/>
            <person name="Schoof H."/>
            <person name="Rudd S."/>
            <person name="Zaccaria P."/>
            <person name="Mewes H.-W."/>
            <person name="Mayer K.F.X."/>
            <person name="Kaul S."/>
            <person name="Town C.D."/>
            <person name="Koo H.L."/>
            <person name="Tallon L.J."/>
            <person name="Jenkins J."/>
            <person name="Rooney T."/>
            <person name="Rizzo M."/>
            <person name="Walts A."/>
            <person name="Utterback T."/>
            <person name="Fujii C.Y."/>
            <person name="Shea T.P."/>
            <person name="Creasy T.H."/>
            <person name="Haas B."/>
            <person name="Maiti R."/>
            <person name="Wu D."/>
            <person name="Peterson J."/>
            <person name="Van Aken S."/>
            <person name="Pai G."/>
            <person name="Militscher J."/>
            <person name="Sellers P."/>
            <person name="Gill J.E."/>
            <person name="Feldblyum T.V."/>
            <person name="Preuss D."/>
            <person name="Lin X."/>
            <person name="Nierman W.C."/>
            <person name="Salzberg S.L."/>
            <person name="White O."/>
            <person name="Venter J.C."/>
            <person name="Fraser C.M."/>
            <person name="Kaneko T."/>
            <person name="Nakamura Y."/>
            <person name="Sato S."/>
            <person name="Kato T."/>
            <person name="Asamizu E."/>
            <person name="Sasamoto S."/>
            <person name="Kimura T."/>
            <person name="Idesawa K."/>
            <person name="Kawashima K."/>
            <person name="Kishida Y."/>
            <person name="Kiyokawa C."/>
            <person name="Kohara M."/>
            <person name="Matsumoto M."/>
            <person name="Matsuno A."/>
            <person name="Muraki A."/>
            <person name="Nakayama S."/>
            <person name="Nakazaki N."/>
            <person name="Shinpo S."/>
            <person name="Takeuchi C."/>
            <person name="Wada T."/>
            <person name="Watanabe A."/>
            <person name="Yamada M."/>
            <person name="Yasuda M."/>
            <person name="Tabata S."/>
        </authorList>
    </citation>
    <scope>NUCLEOTIDE SEQUENCE [LARGE SCALE GENOMIC DNA]</scope>
    <source>
        <strain>cv. Columbia</strain>
    </source>
</reference>
<reference key="2">
    <citation type="journal article" date="2017" name="Plant J.">
        <title>Araport11: a complete reannotation of the Arabidopsis thaliana reference genome.</title>
        <authorList>
            <person name="Cheng C.Y."/>
            <person name="Krishnakumar V."/>
            <person name="Chan A.P."/>
            <person name="Thibaud-Nissen F."/>
            <person name="Schobel S."/>
            <person name="Town C.D."/>
        </authorList>
    </citation>
    <scope>GENOME REANNOTATION</scope>
    <source>
        <strain>cv. Columbia</strain>
    </source>
</reference>
<reference key="3">
    <citation type="journal article" date="2003" name="Science">
        <title>Empirical analysis of transcriptional activity in the Arabidopsis genome.</title>
        <authorList>
            <person name="Yamada K."/>
            <person name="Lim J."/>
            <person name="Dale J.M."/>
            <person name="Chen H."/>
            <person name="Shinn P."/>
            <person name="Palm C.J."/>
            <person name="Southwick A.M."/>
            <person name="Wu H.C."/>
            <person name="Kim C.J."/>
            <person name="Nguyen M."/>
            <person name="Pham P.K."/>
            <person name="Cheuk R.F."/>
            <person name="Karlin-Newmann G."/>
            <person name="Liu S.X."/>
            <person name="Lam B."/>
            <person name="Sakano H."/>
            <person name="Wu T."/>
            <person name="Yu G."/>
            <person name="Miranda M."/>
            <person name="Quach H.L."/>
            <person name="Tripp M."/>
            <person name="Chang C.H."/>
            <person name="Lee J.M."/>
            <person name="Toriumi M.J."/>
            <person name="Chan M.M."/>
            <person name="Tang C.C."/>
            <person name="Onodera C.S."/>
            <person name="Deng J.M."/>
            <person name="Akiyama K."/>
            <person name="Ansari Y."/>
            <person name="Arakawa T."/>
            <person name="Banh J."/>
            <person name="Banno F."/>
            <person name="Bowser L."/>
            <person name="Brooks S.Y."/>
            <person name="Carninci P."/>
            <person name="Chao Q."/>
            <person name="Choy N."/>
            <person name="Enju A."/>
            <person name="Goldsmith A.D."/>
            <person name="Gurjal M."/>
            <person name="Hansen N.F."/>
            <person name="Hayashizaki Y."/>
            <person name="Johnson-Hopson C."/>
            <person name="Hsuan V.W."/>
            <person name="Iida K."/>
            <person name="Karnes M."/>
            <person name="Khan S."/>
            <person name="Koesema E."/>
            <person name="Ishida J."/>
            <person name="Jiang P.X."/>
            <person name="Jones T."/>
            <person name="Kawai J."/>
            <person name="Kamiya A."/>
            <person name="Meyers C."/>
            <person name="Nakajima M."/>
            <person name="Narusaka M."/>
            <person name="Seki M."/>
            <person name="Sakurai T."/>
            <person name="Satou M."/>
            <person name="Tamse R."/>
            <person name="Vaysberg M."/>
            <person name="Wallender E.K."/>
            <person name="Wong C."/>
            <person name="Yamamura Y."/>
            <person name="Yuan S."/>
            <person name="Shinozaki K."/>
            <person name="Davis R.W."/>
            <person name="Theologis A."/>
            <person name="Ecker J.R."/>
        </authorList>
    </citation>
    <scope>NUCLEOTIDE SEQUENCE [LARGE SCALE MRNA]</scope>
    <source>
        <strain>cv. Columbia</strain>
    </source>
</reference>
<reference key="4">
    <citation type="journal article" date="2012" name="Mol. Cell. Proteomics">
        <title>Comparative large-scale characterisation of plant vs. mammal proteins reveals similar and idiosyncratic N-alpha acetylation features.</title>
        <authorList>
            <person name="Bienvenut W.V."/>
            <person name="Sumpton D."/>
            <person name="Martinez A."/>
            <person name="Lilla S."/>
            <person name="Espagne C."/>
            <person name="Meinnel T."/>
            <person name="Giglione C."/>
        </authorList>
    </citation>
    <scope>ACETYLATION [LARGE SCALE ANALYSIS] AT MET-1</scope>
    <scope>IDENTIFICATION BY MASS SPECTROMETRY [LARGE SCALE ANALYSIS]</scope>
</reference>
<protein>
    <recommendedName>
        <fullName>Probable boron transporter 3</fullName>
    </recommendedName>
</protein>
<name>BOR3_ARATH</name>
<feature type="chain" id="PRO_0000079239" description="Probable boron transporter 3">
    <location>
        <begin position="1"/>
        <end position="732"/>
    </location>
</feature>
<feature type="topological domain" description="Cytoplasmic" evidence="2">
    <location>
        <begin position="1"/>
        <end position="37"/>
    </location>
</feature>
<feature type="transmembrane region" description="Helical" evidence="2">
    <location>
        <begin position="38"/>
        <end position="58"/>
    </location>
</feature>
<feature type="topological domain" description="Extracellular" evidence="2">
    <location>
        <begin position="59"/>
        <end position="77"/>
    </location>
</feature>
<feature type="transmembrane region" description="Helical" evidence="2">
    <location>
        <begin position="78"/>
        <end position="98"/>
    </location>
</feature>
<feature type="topological domain" description="Cytoplasmic" evidence="2">
    <location>
        <begin position="99"/>
        <end position="123"/>
    </location>
</feature>
<feature type="transmembrane region" description="Helical" evidence="2">
    <location>
        <begin position="124"/>
        <end position="144"/>
    </location>
</feature>
<feature type="topological domain" description="Extracellular" evidence="2">
    <location>
        <begin position="145"/>
        <end position="157"/>
    </location>
</feature>
<feature type="transmembrane region" description="Helical" evidence="2">
    <location>
        <begin position="158"/>
        <end position="178"/>
    </location>
</feature>
<feature type="topological domain" description="Cytoplasmic" evidence="2">
    <location>
        <begin position="179"/>
        <end position="197"/>
    </location>
</feature>
<feature type="transmembrane region" description="Helical" evidence="2">
    <location>
        <begin position="198"/>
        <end position="218"/>
    </location>
</feature>
<feature type="topological domain" description="Extracellular" evidence="2">
    <location>
        <begin position="219"/>
        <end position="234"/>
    </location>
</feature>
<feature type="transmembrane region" description="Helical" evidence="2">
    <location>
        <begin position="235"/>
        <end position="255"/>
    </location>
</feature>
<feature type="topological domain" description="Cytoplasmic" evidence="2">
    <location>
        <begin position="256"/>
        <end position="291"/>
    </location>
</feature>
<feature type="transmembrane region" description="Helical" evidence="2">
    <location>
        <begin position="292"/>
        <end position="312"/>
    </location>
</feature>
<feature type="topological domain" description="Extracellular" evidence="2">
    <location>
        <begin position="313"/>
        <end position="339"/>
    </location>
</feature>
<feature type="transmembrane region" description="Helical" evidence="2">
    <location>
        <begin position="340"/>
        <end position="360"/>
    </location>
</feature>
<feature type="topological domain" description="Cytoplasmic" evidence="2">
    <location>
        <begin position="361"/>
        <end position="463"/>
    </location>
</feature>
<feature type="transmembrane region" description="Helical" evidence="2">
    <location>
        <begin position="464"/>
        <end position="484"/>
    </location>
</feature>
<feature type="topological domain" description="Extracellular" evidence="2">
    <location>
        <begin position="485"/>
        <end position="556"/>
    </location>
</feature>
<feature type="transmembrane region" description="Helical" evidence="2">
    <location>
        <begin position="557"/>
        <end position="577"/>
    </location>
</feature>
<feature type="topological domain" description="Cytoplasmic" evidence="2">
    <location>
        <begin position="578"/>
        <end position="732"/>
    </location>
</feature>
<feature type="region of interest" description="Disordered" evidence="3">
    <location>
        <begin position="695"/>
        <end position="732"/>
    </location>
</feature>
<feature type="modified residue" description="N-acetylmethionine" evidence="5">
    <location>
        <position position="1"/>
    </location>
</feature>
<accession>Q93Z13</accession>
<accession>Q9SQU8</accession>
<gene>
    <name type="primary">BOR3</name>
    <name type="ordered locus">At3g06450</name>
    <name type="ORF">F24P17.6</name>
</gene>
<keyword id="KW-0007">Acetylation</keyword>
<keyword id="KW-0039">Anion exchange</keyword>
<keyword id="KW-0406">Ion transport</keyword>
<keyword id="KW-0472">Membrane</keyword>
<keyword id="KW-1185">Reference proteome</keyword>
<keyword id="KW-0812">Transmembrane</keyword>
<keyword id="KW-1133">Transmembrane helix</keyword>
<keyword id="KW-0813">Transport</keyword>
<proteinExistence type="evidence at protein level"/>
<comment type="function">
    <text evidence="1">Probable boron transporter. Boron is essential for maintaining the integrity of plants cell walls (By similarity).</text>
</comment>
<comment type="subcellular location">
    <subcellularLocation>
        <location evidence="1">Membrane</location>
        <topology evidence="1">Multi-pass membrane protein</topology>
    </subcellularLocation>
</comment>
<comment type="similarity">
    <text evidence="4">Belongs to the anion exchanger (TC 2.A.31.3) family.</text>
</comment>
<comment type="sequence caution" evidence="4">
    <conflict type="erroneous gene model prediction">
        <sequence resource="EMBL-CDS" id="AAF08571"/>
    </conflict>
</comment>
<dbReference type="EMBL" id="AC011623">
    <property type="protein sequence ID" value="AAF08571.1"/>
    <property type="status" value="ALT_SEQ"/>
    <property type="molecule type" value="Genomic_DNA"/>
</dbReference>
<dbReference type="EMBL" id="CP002686">
    <property type="protein sequence ID" value="AEE74395.1"/>
    <property type="molecule type" value="Genomic_DNA"/>
</dbReference>
<dbReference type="EMBL" id="CP002686">
    <property type="protein sequence ID" value="AEE74396.1"/>
    <property type="molecule type" value="Genomic_DNA"/>
</dbReference>
<dbReference type="EMBL" id="CP002686">
    <property type="protein sequence ID" value="ANM64581.1"/>
    <property type="molecule type" value="Genomic_DNA"/>
</dbReference>
<dbReference type="EMBL" id="CP002686">
    <property type="protein sequence ID" value="ANM64582.1"/>
    <property type="molecule type" value="Genomic_DNA"/>
</dbReference>
<dbReference type="EMBL" id="AY058850">
    <property type="protein sequence ID" value="AAL24238.1"/>
    <property type="molecule type" value="mRNA"/>
</dbReference>
<dbReference type="EMBL" id="BT000635">
    <property type="protein sequence ID" value="AAN18201.1"/>
    <property type="molecule type" value="mRNA"/>
</dbReference>
<dbReference type="RefSeq" id="NP_001118590.1">
    <property type="nucleotide sequence ID" value="NM_001125118.2"/>
</dbReference>
<dbReference type="RefSeq" id="NP_001326597.1">
    <property type="nucleotide sequence ID" value="NM_001337658.1"/>
</dbReference>
<dbReference type="RefSeq" id="NP_001326598.1">
    <property type="nucleotide sequence ID" value="NM_001337657.1"/>
</dbReference>
<dbReference type="RefSeq" id="NP_187296.2">
    <property type="nucleotide sequence ID" value="NM_111520.5"/>
</dbReference>
<dbReference type="SMR" id="Q93Z13"/>
<dbReference type="BioGRID" id="5156">
    <property type="interactions" value="3"/>
</dbReference>
<dbReference type="FunCoup" id="Q93Z13">
    <property type="interactions" value="1187"/>
</dbReference>
<dbReference type="STRING" id="3702.Q93Z13"/>
<dbReference type="TCDB" id="2.A.31.3.3">
    <property type="family name" value="the anion exchanger (ae) family"/>
</dbReference>
<dbReference type="iPTMnet" id="Q93Z13"/>
<dbReference type="PaxDb" id="3702-AT3G06450.1"/>
<dbReference type="ProteomicsDB" id="240629"/>
<dbReference type="EnsemblPlants" id="AT3G06450.1">
    <property type="protein sequence ID" value="AT3G06450.1"/>
    <property type="gene ID" value="AT3G06450"/>
</dbReference>
<dbReference type="EnsemblPlants" id="AT3G06450.2">
    <property type="protein sequence ID" value="AT3G06450.2"/>
    <property type="gene ID" value="AT3G06450"/>
</dbReference>
<dbReference type="EnsemblPlants" id="AT3G06450.3">
    <property type="protein sequence ID" value="AT3G06450.3"/>
    <property type="gene ID" value="AT3G06450"/>
</dbReference>
<dbReference type="EnsemblPlants" id="AT3G06450.4">
    <property type="protein sequence ID" value="AT3G06450.4"/>
    <property type="gene ID" value="AT3G06450"/>
</dbReference>
<dbReference type="GeneID" id="819821"/>
<dbReference type="Gramene" id="AT3G06450.1">
    <property type="protein sequence ID" value="AT3G06450.1"/>
    <property type="gene ID" value="AT3G06450"/>
</dbReference>
<dbReference type="Gramene" id="AT3G06450.2">
    <property type="protein sequence ID" value="AT3G06450.2"/>
    <property type="gene ID" value="AT3G06450"/>
</dbReference>
<dbReference type="Gramene" id="AT3G06450.3">
    <property type="protein sequence ID" value="AT3G06450.3"/>
    <property type="gene ID" value="AT3G06450"/>
</dbReference>
<dbReference type="Gramene" id="AT3G06450.4">
    <property type="protein sequence ID" value="AT3G06450.4"/>
    <property type="gene ID" value="AT3G06450"/>
</dbReference>
<dbReference type="KEGG" id="ath:AT3G06450"/>
<dbReference type="Araport" id="AT3G06450"/>
<dbReference type="TAIR" id="AT3G06450"/>
<dbReference type="eggNOG" id="KOG1172">
    <property type="taxonomic scope" value="Eukaryota"/>
</dbReference>
<dbReference type="HOGENOM" id="CLU_002289_3_2_1"/>
<dbReference type="InParanoid" id="Q93Z13"/>
<dbReference type="OMA" id="AQFITIC"/>
<dbReference type="PhylomeDB" id="Q93Z13"/>
<dbReference type="PRO" id="PR:Q93Z13"/>
<dbReference type="Proteomes" id="UP000006548">
    <property type="component" value="Chromosome 3"/>
</dbReference>
<dbReference type="ExpressionAtlas" id="Q93Z13">
    <property type="expression patterns" value="baseline and differential"/>
</dbReference>
<dbReference type="GO" id="GO:0005886">
    <property type="term" value="C:plasma membrane"/>
    <property type="evidence" value="ECO:0007005"/>
    <property type="project" value="TAIR"/>
</dbReference>
<dbReference type="GO" id="GO:0005452">
    <property type="term" value="F:solute:inorganic anion antiporter activity"/>
    <property type="evidence" value="ECO:0007669"/>
    <property type="project" value="InterPro"/>
</dbReference>
<dbReference type="GO" id="GO:0006820">
    <property type="term" value="P:monoatomic anion transport"/>
    <property type="evidence" value="ECO:0007669"/>
    <property type="project" value="InterPro"/>
</dbReference>
<dbReference type="FunFam" id="1.10.287.570:FF:000004">
    <property type="entry name" value="probable boron transporter 2"/>
    <property type="match status" value="1"/>
</dbReference>
<dbReference type="Gene3D" id="1.10.287.570">
    <property type="entry name" value="Helical hairpin bin"/>
    <property type="match status" value="1"/>
</dbReference>
<dbReference type="InterPro" id="IPR011531">
    <property type="entry name" value="HCO3_transpt-like_TM_dom"/>
</dbReference>
<dbReference type="InterPro" id="IPR003020">
    <property type="entry name" value="HCO3_transpt_euk"/>
</dbReference>
<dbReference type="PANTHER" id="PTHR11453">
    <property type="entry name" value="ANION EXCHANGE PROTEIN"/>
    <property type="match status" value="1"/>
</dbReference>
<dbReference type="PANTHER" id="PTHR11453:SF110">
    <property type="entry name" value="BORON TRANSPORTER 3-RELATED"/>
    <property type="match status" value="1"/>
</dbReference>
<dbReference type="Pfam" id="PF00955">
    <property type="entry name" value="HCO3_cotransp"/>
    <property type="match status" value="3"/>
</dbReference>